<keyword id="KW-0007">Acetylation</keyword>
<sequence>MKYQLTALEARVIGCLLEKQVTTPEQYPLSVNGVVTACNQKTNREPVMNLSESEVQEQLDNLVKRHYLRTVSGFGNRVTKYEQRFCNSEFGDLKLSAAEVALITTLLLRGAQTPGELRSRAARMYEFSDMAEVESTLEQLANREDGPFVVRLAREPGKRESRYMHLFSGEVEDQPAVMDMSNAVDGDLQARVEALEIEVAELKQRLDSLLAHLGD</sequence>
<evidence type="ECO:0000255" key="1">
    <source>
        <dbReference type="HAMAP-Rule" id="MF_01584"/>
    </source>
</evidence>
<feature type="chain" id="PRO_0000309385" description="UPF0502 protein YceH">
    <location>
        <begin position="1"/>
        <end position="215"/>
    </location>
</feature>
<feature type="modified residue" description="N6-acetyllysine" evidence="1">
    <location>
        <position position="80"/>
    </location>
</feature>
<name>YCEH_ECOUT</name>
<dbReference type="EMBL" id="CP000243">
    <property type="protein sequence ID" value="ABE06674.1"/>
    <property type="molecule type" value="Genomic_DNA"/>
</dbReference>
<dbReference type="RefSeq" id="WP_000877109.1">
    <property type="nucleotide sequence ID" value="NZ_CP064825.1"/>
</dbReference>
<dbReference type="SMR" id="Q1RD90"/>
<dbReference type="KEGG" id="eci:UTI89_C1192"/>
<dbReference type="HOGENOM" id="CLU_057831_2_0_6"/>
<dbReference type="Proteomes" id="UP000001952">
    <property type="component" value="Chromosome"/>
</dbReference>
<dbReference type="FunFam" id="1.10.10.10:FF:000196">
    <property type="entry name" value="UPF0502 protein YceH"/>
    <property type="match status" value="1"/>
</dbReference>
<dbReference type="FunFam" id="1.10.10.10:FF:000241">
    <property type="entry name" value="UPF0502 protein YceH"/>
    <property type="match status" value="1"/>
</dbReference>
<dbReference type="Gene3D" id="1.10.10.10">
    <property type="entry name" value="Winged helix-like DNA-binding domain superfamily/Winged helix DNA-binding domain"/>
    <property type="match status" value="2"/>
</dbReference>
<dbReference type="HAMAP" id="MF_01584">
    <property type="entry name" value="UPF0502"/>
    <property type="match status" value="1"/>
</dbReference>
<dbReference type="InterPro" id="IPR007432">
    <property type="entry name" value="DUF480"/>
</dbReference>
<dbReference type="InterPro" id="IPR036388">
    <property type="entry name" value="WH-like_DNA-bd_sf"/>
</dbReference>
<dbReference type="InterPro" id="IPR036390">
    <property type="entry name" value="WH_DNA-bd_sf"/>
</dbReference>
<dbReference type="NCBIfam" id="NF008413">
    <property type="entry name" value="PRK11239.1"/>
    <property type="match status" value="1"/>
</dbReference>
<dbReference type="PANTHER" id="PTHR38768">
    <property type="entry name" value="UPF0502 PROTEIN YCEH"/>
    <property type="match status" value="1"/>
</dbReference>
<dbReference type="PANTHER" id="PTHR38768:SF1">
    <property type="entry name" value="UPF0502 PROTEIN YCEH"/>
    <property type="match status" value="1"/>
</dbReference>
<dbReference type="Pfam" id="PF04337">
    <property type="entry name" value="DUF480"/>
    <property type="match status" value="1"/>
</dbReference>
<dbReference type="SUPFAM" id="SSF46785">
    <property type="entry name" value="Winged helix' DNA-binding domain"/>
    <property type="match status" value="2"/>
</dbReference>
<comment type="similarity">
    <text evidence="1">Belongs to the UPF0502 family.</text>
</comment>
<reference key="1">
    <citation type="journal article" date="2006" name="Proc. Natl. Acad. Sci. U.S.A.">
        <title>Identification of genes subject to positive selection in uropathogenic strains of Escherichia coli: a comparative genomics approach.</title>
        <authorList>
            <person name="Chen S.L."/>
            <person name="Hung C.-S."/>
            <person name="Xu J."/>
            <person name="Reigstad C.S."/>
            <person name="Magrini V."/>
            <person name="Sabo A."/>
            <person name="Blasiar D."/>
            <person name="Bieri T."/>
            <person name="Meyer R.R."/>
            <person name="Ozersky P."/>
            <person name="Armstrong J.R."/>
            <person name="Fulton R.S."/>
            <person name="Latreille J.P."/>
            <person name="Spieth J."/>
            <person name="Hooton T.M."/>
            <person name="Mardis E.R."/>
            <person name="Hultgren S.J."/>
            <person name="Gordon J.I."/>
        </authorList>
    </citation>
    <scope>NUCLEOTIDE SEQUENCE [LARGE SCALE GENOMIC DNA]</scope>
    <source>
        <strain>UTI89 / UPEC</strain>
    </source>
</reference>
<proteinExistence type="inferred from homology"/>
<gene>
    <name evidence="1" type="primary">yceH</name>
    <name type="ordered locus">UTI89_C1192</name>
</gene>
<protein>
    <recommendedName>
        <fullName evidence="1">UPF0502 protein YceH</fullName>
    </recommendedName>
</protein>
<accession>Q1RD90</accession>
<organism>
    <name type="scientific">Escherichia coli (strain UTI89 / UPEC)</name>
    <dbReference type="NCBI Taxonomy" id="364106"/>
    <lineage>
        <taxon>Bacteria</taxon>
        <taxon>Pseudomonadati</taxon>
        <taxon>Pseudomonadota</taxon>
        <taxon>Gammaproteobacteria</taxon>
        <taxon>Enterobacterales</taxon>
        <taxon>Enterobacteriaceae</taxon>
        <taxon>Escherichia</taxon>
    </lineage>
</organism>